<gene>
    <name evidence="1" type="primary">asnA</name>
    <name type="ordered locus">SFV_3770</name>
</gene>
<name>ASNA_SHIF8</name>
<sequence length="330" mass="36643">MKTAYIAKQRQISFVKSHFSRQLEERLGLIEVQAPILSRVGDGTQDNLSGCEKAVQVKVKALPDAQFEVVHSLAKWKRQTLGQHDFSAGEGLYTHMKALRPDEDRLSPLHSVYVDQWDWERVMGDGERQLSTLKSTVEAIWAGIKATEAAVNEEFGLAPFLPDQIHFVHSQELLSRYPDLDAKGRERAIAKDLGAVFLVGIGGKLSDGHRHDVRAPDYDDWSTPSELGHAGLNGDILVWNPVLEDAFELSSMGIRVDADTLKHQLALTGDEDRLQLEWHQALLRGEMPQTIGGGIGQSRLTMLLLQLPHIGQVQCGVWPAAVRESVPSLL</sequence>
<proteinExistence type="inferred from homology"/>
<organism>
    <name type="scientific">Shigella flexneri serotype 5b (strain 8401)</name>
    <dbReference type="NCBI Taxonomy" id="373384"/>
    <lineage>
        <taxon>Bacteria</taxon>
        <taxon>Pseudomonadati</taxon>
        <taxon>Pseudomonadota</taxon>
        <taxon>Gammaproteobacteria</taxon>
        <taxon>Enterobacterales</taxon>
        <taxon>Enterobacteriaceae</taxon>
        <taxon>Shigella</taxon>
    </lineage>
</organism>
<comment type="catalytic activity">
    <reaction evidence="1">
        <text>L-aspartate + NH4(+) + ATP = L-asparagine + AMP + diphosphate + H(+)</text>
        <dbReference type="Rhea" id="RHEA:11372"/>
        <dbReference type="ChEBI" id="CHEBI:15378"/>
        <dbReference type="ChEBI" id="CHEBI:28938"/>
        <dbReference type="ChEBI" id="CHEBI:29991"/>
        <dbReference type="ChEBI" id="CHEBI:30616"/>
        <dbReference type="ChEBI" id="CHEBI:33019"/>
        <dbReference type="ChEBI" id="CHEBI:58048"/>
        <dbReference type="ChEBI" id="CHEBI:456215"/>
        <dbReference type="EC" id="6.3.1.1"/>
    </reaction>
</comment>
<comment type="pathway">
    <text evidence="1">Amino-acid biosynthesis; L-asparagine biosynthesis; L-asparagine from L-aspartate (ammonia route): step 1/1.</text>
</comment>
<comment type="subcellular location">
    <subcellularLocation>
        <location evidence="1">Cytoplasm</location>
    </subcellularLocation>
</comment>
<comment type="similarity">
    <text evidence="1">Belongs to the class-II aminoacyl-tRNA synthetase family. AsnA subfamily.</text>
</comment>
<accession>Q0SYT2</accession>
<dbReference type="EC" id="6.3.1.1" evidence="1"/>
<dbReference type="EMBL" id="CP000266">
    <property type="protein sequence ID" value="ABF05783.1"/>
    <property type="molecule type" value="Genomic_DNA"/>
</dbReference>
<dbReference type="RefSeq" id="WP_000845131.1">
    <property type="nucleotide sequence ID" value="NC_008258.1"/>
</dbReference>
<dbReference type="SMR" id="Q0SYT2"/>
<dbReference type="KEGG" id="sfv:SFV_3770"/>
<dbReference type="HOGENOM" id="CLU_071543_0_0_6"/>
<dbReference type="UniPathway" id="UPA00134">
    <property type="reaction ID" value="UER00194"/>
</dbReference>
<dbReference type="Proteomes" id="UP000000659">
    <property type="component" value="Chromosome"/>
</dbReference>
<dbReference type="GO" id="GO:0005829">
    <property type="term" value="C:cytosol"/>
    <property type="evidence" value="ECO:0007669"/>
    <property type="project" value="TreeGrafter"/>
</dbReference>
<dbReference type="GO" id="GO:0004071">
    <property type="term" value="F:aspartate-ammonia ligase activity"/>
    <property type="evidence" value="ECO:0007669"/>
    <property type="project" value="UniProtKB-UniRule"/>
</dbReference>
<dbReference type="GO" id="GO:0005524">
    <property type="term" value="F:ATP binding"/>
    <property type="evidence" value="ECO:0007669"/>
    <property type="project" value="UniProtKB-UniRule"/>
</dbReference>
<dbReference type="GO" id="GO:0070981">
    <property type="term" value="P:L-asparagine biosynthetic process"/>
    <property type="evidence" value="ECO:0007669"/>
    <property type="project" value="UniProtKB-UniRule"/>
</dbReference>
<dbReference type="CDD" id="cd00645">
    <property type="entry name" value="AsnA"/>
    <property type="match status" value="1"/>
</dbReference>
<dbReference type="FunFam" id="3.30.930.10:FF:000025">
    <property type="entry name" value="Aspartate--ammonia ligase"/>
    <property type="match status" value="1"/>
</dbReference>
<dbReference type="Gene3D" id="3.30.930.10">
    <property type="entry name" value="Bira Bifunctional Protein, Domain 2"/>
    <property type="match status" value="1"/>
</dbReference>
<dbReference type="HAMAP" id="MF_00555">
    <property type="entry name" value="AsnA"/>
    <property type="match status" value="1"/>
</dbReference>
<dbReference type="InterPro" id="IPR006195">
    <property type="entry name" value="aa-tRNA-synth_II"/>
</dbReference>
<dbReference type="InterPro" id="IPR045864">
    <property type="entry name" value="aa-tRNA-synth_II/BPL/LPL"/>
</dbReference>
<dbReference type="InterPro" id="IPR004618">
    <property type="entry name" value="AsnA"/>
</dbReference>
<dbReference type="NCBIfam" id="TIGR00669">
    <property type="entry name" value="asnA"/>
    <property type="match status" value="1"/>
</dbReference>
<dbReference type="PANTHER" id="PTHR30073">
    <property type="entry name" value="ASPARTATE--AMMONIA LIGASE"/>
    <property type="match status" value="1"/>
</dbReference>
<dbReference type="PANTHER" id="PTHR30073:SF5">
    <property type="entry name" value="ASPARTATE--AMMONIA LIGASE"/>
    <property type="match status" value="1"/>
</dbReference>
<dbReference type="Pfam" id="PF03590">
    <property type="entry name" value="AsnA"/>
    <property type="match status" value="1"/>
</dbReference>
<dbReference type="PIRSF" id="PIRSF001555">
    <property type="entry name" value="Asp_ammon_ligase"/>
    <property type="match status" value="1"/>
</dbReference>
<dbReference type="SUPFAM" id="SSF55681">
    <property type="entry name" value="Class II aaRS and biotin synthetases"/>
    <property type="match status" value="1"/>
</dbReference>
<dbReference type="PROSITE" id="PS50862">
    <property type="entry name" value="AA_TRNA_LIGASE_II"/>
    <property type="match status" value="1"/>
</dbReference>
<protein>
    <recommendedName>
        <fullName evidence="1">Aspartate--ammonia ligase</fullName>
        <ecNumber evidence="1">6.3.1.1</ecNumber>
    </recommendedName>
    <alternativeName>
        <fullName evidence="1">Asparagine synthetase A</fullName>
    </alternativeName>
</protein>
<keyword id="KW-0028">Amino-acid biosynthesis</keyword>
<keyword id="KW-0061">Asparagine biosynthesis</keyword>
<keyword id="KW-0067">ATP-binding</keyword>
<keyword id="KW-0963">Cytoplasm</keyword>
<keyword id="KW-0436">Ligase</keyword>
<keyword id="KW-0547">Nucleotide-binding</keyword>
<reference key="1">
    <citation type="journal article" date="2006" name="BMC Genomics">
        <title>Complete genome sequence of Shigella flexneri 5b and comparison with Shigella flexneri 2a.</title>
        <authorList>
            <person name="Nie H."/>
            <person name="Yang F."/>
            <person name="Zhang X."/>
            <person name="Yang J."/>
            <person name="Chen L."/>
            <person name="Wang J."/>
            <person name="Xiong Z."/>
            <person name="Peng J."/>
            <person name="Sun L."/>
            <person name="Dong J."/>
            <person name="Xue Y."/>
            <person name="Xu X."/>
            <person name="Chen S."/>
            <person name="Yao Z."/>
            <person name="Shen Y."/>
            <person name="Jin Q."/>
        </authorList>
    </citation>
    <scope>NUCLEOTIDE SEQUENCE [LARGE SCALE GENOMIC DNA]</scope>
    <source>
        <strain>8401</strain>
    </source>
</reference>
<feature type="chain" id="PRO_1000017961" description="Aspartate--ammonia ligase">
    <location>
        <begin position="1"/>
        <end position="330"/>
    </location>
</feature>
<evidence type="ECO:0000255" key="1">
    <source>
        <dbReference type="HAMAP-Rule" id="MF_00555"/>
    </source>
</evidence>